<evidence type="ECO:0000250" key="1"/>
<evidence type="ECO:0000305" key="2"/>
<reference key="1">
    <citation type="journal article" date="1996" name="Science">
        <title>Complete genome sequence of the methanogenic archaeon, Methanococcus jannaschii.</title>
        <authorList>
            <person name="Bult C.J."/>
            <person name="White O."/>
            <person name="Olsen G.J."/>
            <person name="Zhou L."/>
            <person name="Fleischmann R.D."/>
            <person name="Sutton G.G."/>
            <person name="Blake J.A."/>
            <person name="FitzGerald L.M."/>
            <person name="Clayton R.A."/>
            <person name="Gocayne J.D."/>
            <person name="Kerlavage A.R."/>
            <person name="Dougherty B.A."/>
            <person name="Tomb J.-F."/>
            <person name="Adams M.D."/>
            <person name="Reich C.I."/>
            <person name="Overbeek R."/>
            <person name="Kirkness E.F."/>
            <person name="Weinstock K.G."/>
            <person name="Merrick J.M."/>
            <person name="Glodek A."/>
            <person name="Scott J.L."/>
            <person name="Geoghagen N.S.M."/>
            <person name="Weidman J.F."/>
            <person name="Fuhrmann J.L."/>
            <person name="Nguyen D."/>
            <person name="Utterback T.R."/>
            <person name="Kelley J.M."/>
            <person name="Peterson J.D."/>
            <person name="Sadow P.W."/>
            <person name="Hanna M.C."/>
            <person name="Cotton M.D."/>
            <person name="Roberts K.M."/>
            <person name="Hurst M.A."/>
            <person name="Kaine B.P."/>
            <person name="Borodovsky M."/>
            <person name="Klenk H.-P."/>
            <person name="Fraser C.M."/>
            <person name="Smith H.O."/>
            <person name="Woese C.R."/>
            <person name="Venter J.C."/>
        </authorList>
    </citation>
    <scope>NUCLEOTIDE SEQUENCE [LARGE SCALE GENOMIC DNA]</scope>
    <source>
        <strain>ATCC 43067 / DSM 2661 / JAL-1 / JCM 10045 / NBRC 100440</strain>
    </source>
</reference>
<name>IF2A_METJA</name>
<feature type="chain" id="PRO_0000137394" description="Translation initiation factor 2 subunit alpha">
    <location>
        <begin position="1"/>
        <end position="266"/>
    </location>
</feature>
<feature type="domain" description="S1 motif">
    <location>
        <begin position="12"/>
        <end position="83"/>
    </location>
</feature>
<dbReference type="EMBL" id="L77117">
    <property type="protein sequence ID" value="AAB98098.1"/>
    <property type="molecule type" value="Genomic_DNA"/>
</dbReference>
<dbReference type="PIR" id="E64314">
    <property type="entry name" value="E64314"/>
</dbReference>
<dbReference type="SMR" id="Q57581"/>
<dbReference type="FunCoup" id="Q57581">
    <property type="interactions" value="214"/>
</dbReference>
<dbReference type="STRING" id="243232.MJ_0117"/>
<dbReference type="PaxDb" id="243232-MJ_0117"/>
<dbReference type="EnsemblBacteria" id="AAB98098">
    <property type="protein sequence ID" value="AAB98098"/>
    <property type="gene ID" value="MJ_0117"/>
</dbReference>
<dbReference type="KEGG" id="mja:MJ_0117"/>
<dbReference type="eggNOG" id="arCOG04107">
    <property type="taxonomic scope" value="Archaea"/>
</dbReference>
<dbReference type="HOGENOM" id="CLU_033458_0_2_2"/>
<dbReference type="InParanoid" id="Q57581"/>
<dbReference type="PhylomeDB" id="Q57581"/>
<dbReference type="Proteomes" id="UP000000805">
    <property type="component" value="Chromosome"/>
</dbReference>
<dbReference type="GO" id="GO:0043022">
    <property type="term" value="F:ribosome binding"/>
    <property type="evidence" value="ECO:0000318"/>
    <property type="project" value="GO_Central"/>
</dbReference>
<dbReference type="GO" id="GO:0003723">
    <property type="term" value="F:RNA binding"/>
    <property type="evidence" value="ECO:0007669"/>
    <property type="project" value="UniProtKB-UniRule"/>
</dbReference>
<dbReference type="GO" id="GO:0003743">
    <property type="term" value="F:translation initiation factor activity"/>
    <property type="evidence" value="ECO:0000318"/>
    <property type="project" value="GO_Central"/>
</dbReference>
<dbReference type="GO" id="GO:0006413">
    <property type="term" value="P:translational initiation"/>
    <property type="evidence" value="ECO:0000318"/>
    <property type="project" value="GO_Central"/>
</dbReference>
<dbReference type="CDD" id="cd04452">
    <property type="entry name" value="S1_IF2_alpha"/>
    <property type="match status" value="1"/>
</dbReference>
<dbReference type="FunFam" id="2.40.50.140:FF:000015">
    <property type="entry name" value="Eukaryotic translation initiation factor 2 subunit alpha"/>
    <property type="match status" value="1"/>
</dbReference>
<dbReference type="FunFam" id="1.10.150.190:FF:000006">
    <property type="entry name" value="Translation initiation factor 2 subunit alpha"/>
    <property type="match status" value="1"/>
</dbReference>
<dbReference type="FunFam" id="3.30.70.1130:FF:000002">
    <property type="entry name" value="Translation initiation factor 2 subunit alpha"/>
    <property type="match status" value="1"/>
</dbReference>
<dbReference type="Gene3D" id="3.30.70.1130">
    <property type="entry name" value="EIF_2_alpha"/>
    <property type="match status" value="1"/>
</dbReference>
<dbReference type="Gene3D" id="2.40.50.140">
    <property type="entry name" value="Nucleic acid-binding proteins"/>
    <property type="match status" value="1"/>
</dbReference>
<dbReference type="Gene3D" id="1.10.150.190">
    <property type="entry name" value="Translation initiation factor 2, subunit 1, domain 2"/>
    <property type="match status" value="1"/>
</dbReference>
<dbReference type="HAMAP" id="MF_00231">
    <property type="entry name" value="eIF_2_alpha"/>
    <property type="match status" value="1"/>
</dbReference>
<dbReference type="InterPro" id="IPR012340">
    <property type="entry name" value="NA-bd_OB-fold"/>
</dbReference>
<dbReference type="InterPro" id="IPR003029">
    <property type="entry name" value="S1_domain"/>
</dbReference>
<dbReference type="InterPro" id="IPR044126">
    <property type="entry name" value="S1_IF2_alpha"/>
</dbReference>
<dbReference type="InterPro" id="IPR022964">
    <property type="entry name" value="TIF2_asu_arc"/>
</dbReference>
<dbReference type="InterPro" id="IPR024055">
    <property type="entry name" value="TIF2_asu_C"/>
</dbReference>
<dbReference type="InterPro" id="IPR024054">
    <property type="entry name" value="TIF2_asu_middle_sf"/>
</dbReference>
<dbReference type="InterPro" id="IPR011488">
    <property type="entry name" value="TIF_2_asu"/>
</dbReference>
<dbReference type="NCBIfam" id="NF003062">
    <property type="entry name" value="PRK03987.1-1"/>
    <property type="match status" value="1"/>
</dbReference>
<dbReference type="NCBIfam" id="NF003063">
    <property type="entry name" value="PRK03987.1-2"/>
    <property type="match status" value="1"/>
</dbReference>
<dbReference type="NCBIfam" id="NF003064">
    <property type="entry name" value="PRK03987.1-4"/>
    <property type="match status" value="1"/>
</dbReference>
<dbReference type="PANTHER" id="PTHR10602">
    <property type="entry name" value="EUKARYOTIC TRANSLATION INITIATION FACTOR 2 SUBUNIT 1"/>
    <property type="match status" value="1"/>
</dbReference>
<dbReference type="PANTHER" id="PTHR10602:SF0">
    <property type="entry name" value="EUKARYOTIC TRANSLATION INITIATION FACTOR 2 SUBUNIT 1"/>
    <property type="match status" value="1"/>
</dbReference>
<dbReference type="Pfam" id="PF07541">
    <property type="entry name" value="EIF_2_alpha"/>
    <property type="match status" value="1"/>
</dbReference>
<dbReference type="Pfam" id="PF00575">
    <property type="entry name" value="S1"/>
    <property type="match status" value="1"/>
</dbReference>
<dbReference type="SMART" id="SM00316">
    <property type="entry name" value="S1"/>
    <property type="match status" value="1"/>
</dbReference>
<dbReference type="SUPFAM" id="SSF110993">
    <property type="entry name" value="eIF-2-alpha, C-terminal domain"/>
    <property type="match status" value="1"/>
</dbReference>
<dbReference type="SUPFAM" id="SSF116742">
    <property type="entry name" value="eIF2alpha middle domain-like"/>
    <property type="match status" value="1"/>
</dbReference>
<dbReference type="SUPFAM" id="SSF50249">
    <property type="entry name" value="Nucleic acid-binding proteins"/>
    <property type="match status" value="1"/>
</dbReference>
<dbReference type="PROSITE" id="PS50126">
    <property type="entry name" value="S1"/>
    <property type="match status" value="1"/>
</dbReference>
<gene>
    <name type="primary">eif2a</name>
    <name type="ordered locus">MJ0117</name>
</gene>
<proteinExistence type="inferred from homology"/>
<accession>Q57581</accession>
<keyword id="KW-0396">Initiation factor</keyword>
<keyword id="KW-0648">Protein biosynthesis</keyword>
<keyword id="KW-1185">Reference proteome</keyword>
<keyword id="KW-0694">RNA-binding</keyword>
<protein>
    <recommendedName>
        <fullName>Translation initiation factor 2 subunit alpha</fullName>
    </recommendedName>
    <alternativeName>
        <fullName>aIF2-alpha</fullName>
    </alternativeName>
    <alternativeName>
        <fullName>eIF-2-alpha</fullName>
    </alternativeName>
</protein>
<organism>
    <name type="scientific">Methanocaldococcus jannaschii (strain ATCC 43067 / DSM 2661 / JAL-1 / JCM 10045 / NBRC 100440)</name>
    <name type="common">Methanococcus jannaschii</name>
    <dbReference type="NCBI Taxonomy" id="243232"/>
    <lineage>
        <taxon>Archaea</taxon>
        <taxon>Methanobacteriati</taxon>
        <taxon>Methanobacteriota</taxon>
        <taxon>Methanomada group</taxon>
        <taxon>Methanococci</taxon>
        <taxon>Methanococcales</taxon>
        <taxon>Methanocaldococcaceae</taxon>
        <taxon>Methanocaldococcus</taxon>
    </lineage>
</organism>
<comment type="function">
    <text evidence="1">eIF-2 functions in the early steps of protein synthesis by forming a ternary complex with GTP and initiator tRNA.</text>
</comment>
<comment type="subunit">
    <text evidence="1">Heterotrimer composed of an alpha, a beta and a gamma chain.</text>
</comment>
<comment type="similarity">
    <text evidence="2">Belongs to the eIF-2-alpha family.</text>
</comment>
<sequence length="266" mass="30485">MFIMRREFPEEGDIVIGTVKDVKPYGAFVELLEYPGKEGMIHISEVTSGWVKNIRDHVKVGQRVVAKVLRVDERKGHIDLSLKRVTEQQKRAKVQEWKRFQRASKMLERAAEKLGKSLEEAWEEVGYLLEDEFGELYNAFETMVIEGKEVLDDLEISEEWKNVLYEVAKESIELTNVEVEGVIEMKSYAPDGIKQIKKALTTALKANPYEDVEVKITYIGAPKYRVVVIAPDYKSGEEVFKKVCEKAVATIKKLGGEGTYYRESKK</sequence>